<comment type="function">
    <text evidence="1">Plays a role in virus cell tropism, and may be required for efficient virus replication in macrophages.</text>
</comment>
<comment type="similarity">
    <text evidence="2">Belongs to the asfivirus MGF 360 family.</text>
</comment>
<reference key="1">
    <citation type="journal article" date="1994" name="Virology">
        <title>Two novel multigene families, 530 and 300, in the terminal variable regions of African swine fever virus genome.</title>
        <authorList>
            <person name="Yozawa T."/>
            <person name="Kutish G.F."/>
            <person name="Afonso C.L."/>
            <person name="Lu Z."/>
            <person name="Rock D.L."/>
        </authorList>
    </citation>
    <scope>NUCLEOTIDE SEQUENCE [GENOMIC DNA]</scope>
</reference>
<reference key="2">
    <citation type="submission" date="2003-03" db="EMBL/GenBank/DDBJ databases">
        <title>African swine fever virus genomes.</title>
        <authorList>
            <person name="Kutish G.F."/>
            <person name="Rock D.L."/>
        </authorList>
    </citation>
    <scope>NUCLEOTIDE SEQUENCE [LARGE SCALE GENOMIC DNA]</scope>
</reference>
<organism>
    <name type="scientific">African swine fever virus (isolate Tick/Malawi/Lil 20-1/1983)</name>
    <name type="common">ASFV</name>
    <dbReference type="NCBI Taxonomy" id="10500"/>
    <lineage>
        <taxon>Viruses</taxon>
        <taxon>Varidnaviria</taxon>
        <taxon>Bamfordvirae</taxon>
        <taxon>Nucleocytoviricota</taxon>
        <taxon>Pokkesviricetes</taxon>
        <taxon>Asfuvirales</taxon>
        <taxon>Asfarviridae</taxon>
        <taxon>Asfivirus</taxon>
        <taxon>African swine fever virus</taxon>
    </lineage>
</organism>
<gene>
    <name type="ordered locus">Mal-032</name>
    <name type="ORF">LMW3HL</name>
</gene>
<keyword id="KW-0040">ANK repeat</keyword>
<evidence type="ECO:0000250" key="1"/>
<evidence type="ECO:0000305" key="2"/>
<protein>
    <recommendedName>
        <fullName>Protein MGF 360-12L</fullName>
    </recommendedName>
</protein>
<sequence length="349" mass="41010">MLPSLQSLTKKVLAGQCLPTDQYYLLKCYDLWWYDSPITFDHNLGLIKSAGIKDGLDLNTALVKAVRENNYNLIKLFTEWGADINYGLVSVNTEHTRDLCRELGAKETLNEEEILRIFIDLKFYKTSSNIILCHEVFSNNPLLQKVNNLKMRIEIFWELRELIKKTDLLNNEFSLNTLLLKYWYAIAVRYNLKEAIQYFYQKYTHLNTWRLTCALCFNNVFDLHEAYEKDKIYMDLEEMMRVACIKDHNLSTIYYCYVLGANINQAMLASIQYYNIENMFFCMDLGADVFEENMPVGEGYELIRNILSLKIYSPSTAPLPKNTDPEIIDHVLKNYKSKNMMTFLSYDLR</sequence>
<name>36012_ASFM2</name>
<organismHost>
    <name type="scientific">Ornithodoros</name>
    <name type="common">relapsing fever ticks</name>
    <dbReference type="NCBI Taxonomy" id="6937"/>
</organismHost>
<organismHost>
    <name type="scientific">Phacochoerus aethiopicus</name>
    <name type="common">Warthog</name>
    <dbReference type="NCBI Taxonomy" id="85517"/>
</organismHost>
<organismHost>
    <name type="scientific">Phacochoerus africanus</name>
    <name type="common">Warthog</name>
    <dbReference type="NCBI Taxonomy" id="41426"/>
</organismHost>
<organismHost>
    <name type="scientific">Potamochoerus larvatus</name>
    <name type="common">Bushpig</name>
    <dbReference type="NCBI Taxonomy" id="273792"/>
</organismHost>
<organismHost>
    <name type="scientific">Sus scrofa</name>
    <name type="common">Pig</name>
    <dbReference type="NCBI Taxonomy" id="9823"/>
</organismHost>
<dbReference type="EMBL" id="U03762">
    <property type="protein sequence ID" value="AAA50538.1"/>
    <property type="molecule type" value="Genomic_DNA"/>
</dbReference>
<dbReference type="EMBL" id="AY261361">
    <property type="status" value="NOT_ANNOTATED_CDS"/>
    <property type="molecule type" value="Genomic_DNA"/>
</dbReference>
<dbReference type="SMR" id="Q65125"/>
<dbReference type="Proteomes" id="UP000000860">
    <property type="component" value="Segment"/>
</dbReference>
<dbReference type="GO" id="GO:0042330">
    <property type="term" value="P:taxis"/>
    <property type="evidence" value="ECO:0007669"/>
    <property type="project" value="InterPro"/>
</dbReference>
<dbReference type="InterPro" id="IPR002595">
    <property type="entry name" value="ASFV_MGF360"/>
</dbReference>
<dbReference type="Pfam" id="PF01671">
    <property type="entry name" value="ASFV_360"/>
    <property type="match status" value="1"/>
</dbReference>
<proteinExistence type="inferred from homology"/>
<feature type="chain" id="PRO_0000373283" description="Protein MGF 360-12L">
    <location>
        <begin position="1"/>
        <end position="349"/>
    </location>
</feature>
<feature type="repeat" description="ANK">
    <location>
        <begin position="57"/>
        <end position="89"/>
    </location>
</feature>
<accession>Q65125</accession>